<dbReference type="EC" id="2.7.1.170" evidence="1"/>
<dbReference type="EMBL" id="CP000872">
    <property type="protein sequence ID" value="ABX61999.1"/>
    <property type="molecule type" value="Genomic_DNA"/>
</dbReference>
<dbReference type="RefSeq" id="WP_002964051.1">
    <property type="nucleotide sequence ID" value="NC_010103.1"/>
</dbReference>
<dbReference type="SMR" id="A9MAU6"/>
<dbReference type="KEGG" id="bcs:BCAN_A0938"/>
<dbReference type="HOGENOM" id="CLU_038782_3_0_5"/>
<dbReference type="PhylomeDB" id="A9MAU6"/>
<dbReference type="UniPathway" id="UPA00343"/>
<dbReference type="UniPathway" id="UPA00544"/>
<dbReference type="Proteomes" id="UP000001385">
    <property type="component" value="Chromosome I"/>
</dbReference>
<dbReference type="GO" id="GO:0005524">
    <property type="term" value="F:ATP binding"/>
    <property type="evidence" value="ECO:0007669"/>
    <property type="project" value="UniProtKB-UniRule"/>
</dbReference>
<dbReference type="GO" id="GO:0016301">
    <property type="term" value="F:kinase activity"/>
    <property type="evidence" value="ECO:0007669"/>
    <property type="project" value="UniProtKB-KW"/>
</dbReference>
<dbReference type="GO" id="GO:0016773">
    <property type="term" value="F:phosphotransferase activity, alcohol group as acceptor"/>
    <property type="evidence" value="ECO:0007669"/>
    <property type="project" value="UniProtKB-UniRule"/>
</dbReference>
<dbReference type="GO" id="GO:0097175">
    <property type="term" value="P:1,6-anhydro-N-acetyl-beta-muramic acid catabolic process"/>
    <property type="evidence" value="ECO:0007669"/>
    <property type="project" value="UniProtKB-UniRule"/>
</dbReference>
<dbReference type="GO" id="GO:0006040">
    <property type="term" value="P:amino sugar metabolic process"/>
    <property type="evidence" value="ECO:0007669"/>
    <property type="project" value="InterPro"/>
</dbReference>
<dbReference type="GO" id="GO:0009254">
    <property type="term" value="P:peptidoglycan turnover"/>
    <property type="evidence" value="ECO:0007669"/>
    <property type="project" value="UniProtKB-UniRule"/>
</dbReference>
<dbReference type="Gene3D" id="3.30.420.40">
    <property type="match status" value="2"/>
</dbReference>
<dbReference type="HAMAP" id="MF_01270">
    <property type="entry name" value="AnhMurNAc_kinase"/>
    <property type="match status" value="1"/>
</dbReference>
<dbReference type="InterPro" id="IPR005338">
    <property type="entry name" value="Anhydro_N_Ac-Mur_kinase"/>
</dbReference>
<dbReference type="InterPro" id="IPR043129">
    <property type="entry name" value="ATPase_NBD"/>
</dbReference>
<dbReference type="NCBIfam" id="NF007141">
    <property type="entry name" value="PRK09585.1-5"/>
    <property type="match status" value="1"/>
</dbReference>
<dbReference type="PANTHER" id="PTHR30605">
    <property type="entry name" value="ANHYDRO-N-ACETYLMURAMIC ACID KINASE"/>
    <property type="match status" value="1"/>
</dbReference>
<dbReference type="PANTHER" id="PTHR30605:SF0">
    <property type="entry name" value="ANHYDRO-N-ACETYLMURAMIC ACID KINASE"/>
    <property type="match status" value="1"/>
</dbReference>
<dbReference type="Pfam" id="PF03702">
    <property type="entry name" value="AnmK"/>
    <property type="match status" value="1"/>
</dbReference>
<dbReference type="SUPFAM" id="SSF53067">
    <property type="entry name" value="Actin-like ATPase domain"/>
    <property type="match status" value="1"/>
</dbReference>
<evidence type="ECO:0000255" key="1">
    <source>
        <dbReference type="HAMAP-Rule" id="MF_01270"/>
    </source>
</evidence>
<gene>
    <name evidence="1" type="primary">anmK</name>
    <name type="ordered locus">BCAN_A0938</name>
</gene>
<feature type="chain" id="PRO_1000085830" description="Anhydro-N-acetylmuramic acid kinase">
    <location>
        <begin position="1"/>
        <end position="373"/>
    </location>
</feature>
<feature type="binding site" evidence="1">
    <location>
        <begin position="13"/>
        <end position="20"/>
    </location>
    <ligand>
        <name>ATP</name>
        <dbReference type="ChEBI" id="CHEBI:30616"/>
    </ligand>
</feature>
<proteinExistence type="inferred from homology"/>
<accession>A9MAU6</accession>
<protein>
    <recommendedName>
        <fullName evidence="1">Anhydro-N-acetylmuramic acid kinase</fullName>
        <ecNumber evidence="1">2.7.1.170</ecNumber>
    </recommendedName>
    <alternativeName>
        <fullName evidence="1">AnhMurNAc kinase</fullName>
    </alternativeName>
</protein>
<comment type="function">
    <text evidence="1">Catalyzes the specific phosphorylation of 1,6-anhydro-N-acetylmuramic acid (anhMurNAc) with the simultaneous cleavage of the 1,6-anhydro ring, generating MurNAc-6-P. Is required for the utilization of anhMurNAc either imported from the medium or derived from its own cell wall murein, and thus plays a role in cell wall recycling.</text>
</comment>
<comment type="catalytic activity">
    <reaction evidence="1">
        <text>1,6-anhydro-N-acetyl-beta-muramate + ATP + H2O = N-acetyl-D-muramate 6-phosphate + ADP + H(+)</text>
        <dbReference type="Rhea" id="RHEA:24952"/>
        <dbReference type="ChEBI" id="CHEBI:15377"/>
        <dbReference type="ChEBI" id="CHEBI:15378"/>
        <dbReference type="ChEBI" id="CHEBI:30616"/>
        <dbReference type="ChEBI" id="CHEBI:58690"/>
        <dbReference type="ChEBI" id="CHEBI:58722"/>
        <dbReference type="ChEBI" id="CHEBI:456216"/>
        <dbReference type="EC" id="2.7.1.170"/>
    </reaction>
</comment>
<comment type="pathway">
    <text evidence="1">Amino-sugar metabolism; 1,6-anhydro-N-acetylmuramate degradation.</text>
</comment>
<comment type="pathway">
    <text evidence="1">Cell wall biogenesis; peptidoglycan recycling.</text>
</comment>
<comment type="similarity">
    <text evidence="1">Belongs to the anhydro-N-acetylmuramic acid kinase family.</text>
</comment>
<name>ANMK_BRUC2</name>
<organism>
    <name type="scientific">Brucella canis (strain ATCC 23365 / NCTC 10854 / RM-666)</name>
    <dbReference type="NCBI Taxonomy" id="483179"/>
    <lineage>
        <taxon>Bacteria</taxon>
        <taxon>Pseudomonadati</taxon>
        <taxon>Pseudomonadota</taxon>
        <taxon>Alphaproteobacteria</taxon>
        <taxon>Hyphomicrobiales</taxon>
        <taxon>Brucellaceae</taxon>
        <taxon>Brucella/Ochrobactrum group</taxon>
        <taxon>Brucella</taxon>
    </lineage>
</organism>
<sequence length="373" mass="39828">MPDLKRAIGLMSGTSMDGIDIALLATDGENWIERRASASMDYSDGFRARLKAGLVDARAIKDRAERPGLLRQLEHDLTLLHAVAVHDFLHEQGLQPHEIDVIGFHGQTVLHRPNESLTVQIGDGALLARETGIPVVYDMRAEDMRHGGQGAPLIPAYHAALAANLPLGLKGPVVFVNIGGISNLTYVGEDGALIAYDSGPGNMLIDQWMELHGHGRFDPGGATAMSGSVDRNTAHRYLEHEFFKGNHRRSLDRGDFAIPAKGELNLADGARTLAFVSAAAILKSASHLPARPRTYVVSGGGRKNGALMDELTALAEREGAHVIDADNAGFDGDAMEAEAWAYLAVRSLCGLPLTYPSTTGCDKPVSGGVPVRP</sequence>
<keyword id="KW-0067">ATP-binding</keyword>
<keyword id="KW-0119">Carbohydrate metabolism</keyword>
<keyword id="KW-0418">Kinase</keyword>
<keyword id="KW-0547">Nucleotide-binding</keyword>
<keyword id="KW-1185">Reference proteome</keyword>
<keyword id="KW-0808">Transferase</keyword>
<reference key="1">
    <citation type="submission" date="2007-10" db="EMBL/GenBank/DDBJ databases">
        <title>Brucella canis ATCC 23365 whole genome shotgun sequencing project.</title>
        <authorList>
            <person name="Setubal J.C."/>
            <person name="Bowns C."/>
            <person name="Boyle S."/>
            <person name="Crasta O.R."/>
            <person name="Czar M.J."/>
            <person name="Dharmanolla C."/>
            <person name="Gillespie J.J."/>
            <person name="Kenyon R.W."/>
            <person name="Lu J."/>
            <person name="Mane S."/>
            <person name="Mohapatra S."/>
            <person name="Nagrani S."/>
            <person name="Purkayastha A."/>
            <person name="Rajasimha H.K."/>
            <person name="Shallom J.M."/>
            <person name="Shallom S."/>
            <person name="Shukla M."/>
            <person name="Snyder E.E."/>
            <person name="Sobral B.W."/>
            <person name="Wattam A.R."/>
            <person name="Will R."/>
            <person name="Williams K."/>
            <person name="Yoo H."/>
            <person name="Bruce D."/>
            <person name="Detter C."/>
            <person name="Munk C."/>
            <person name="Brettin T.S."/>
        </authorList>
    </citation>
    <scope>NUCLEOTIDE SEQUENCE [LARGE SCALE GENOMIC DNA]</scope>
    <source>
        <strain>ATCC 23365 / NCTC 10854 / RM-666</strain>
    </source>
</reference>